<organism>
    <name type="scientific">Parvibaculum lavamentivorans (strain DS-1 / DSM 13023 / NCIMB 13966)</name>
    <dbReference type="NCBI Taxonomy" id="402881"/>
    <lineage>
        <taxon>Bacteria</taxon>
        <taxon>Pseudomonadati</taxon>
        <taxon>Pseudomonadota</taxon>
        <taxon>Alphaproteobacteria</taxon>
        <taxon>Hyphomicrobiales</taxon>
        <taxon>Parvibaculaceae</taxon>
        <taxon>Parvibaculum</taxon>
    </lineage>
</organism>
<accession>A7HSL2</accession>
<proteinExistence type="inferred from homology"/>
<dbReference type="EC" id="2.1.1.170" evidence="1"/>
<dbReference type="EMBL" id="CP000774">
    <property type="protein sequence ID" value="ABS62895.1"/>
    <property type="molecule type" value="Genomic_DNA"/>
</dbReference>
<dbReference type="RefSeq" id="WP_012110167.1">
    <property type="nucleotide sequence ID" value="NC_009719.1"/>
</dbReference>
<dbReference type="SMR" id="A7HSL2"/>
<dbReference type="STRING" id="402881.Plav_1275"/>
<dbReference type="KEGG" id="pla:Plav_1275"/>
<dbReference type="eggNOG" id="COG0357">
    <property type="taxonomic scope" value="Bacteria"/>
</dbReference>
<dbReference type="HOGENOM" id="CLU_065341_1_1_5"/>
<dbReference type="OrthoDB" id="9808773at2"/>
<dbReference type="Proteomes" id="UP000006377">
    <property type="component" value="Chromosome"/>
</dbReference>
<dbReference type="GO" id="GO:0005829">
    <property type="term" value="C:cytosol"/>
    <property type="evidence" value="ECO:0007669"/>
    <property type="project" value="TreeGrafter"/>
</dbReference>
<dbReference type="GO" id="GO:0070043">
    <property type="term" value="F:rRNA (guanine-N7-)-methyltransferase activity"/>
    <property type="evidence" value="ECO:0007669"/>
    <property type="project" value="UniProtKB-UniRule"/>
</dbReference>
<dbReference type="Gene3D" id="3.40.50.150">
    <property type="entry name" value="Vaccinia Virus protein VP39"/>
    <property type="match status" value="1"/>
</dbReference>
<dbReference type="HAMAP" id="MF_00074">
    <property type="entry name" value="16SrRNA_methyltr_G"/>
    <property type="match status" value="1"/>
</dbReference>
<dbReference type="InterPro" id="IPR003682">
    <property type="entry name" value="rRNA_ssu_MeTfrase_G"/>
</dbReference>
<dbReference type="InterPro" id="IPR029063">
    <property type="entry name" value="SAM-dependent_MTases_sf"/>
</dbReference>
<dbReference type="NCBIfam" id="TIGR00138">
    <property type="entry name" value="rsmG_gidB"/>
    <property type="match status" value="1"/>
</dbReference>
<dbReference type="PANTHER" id="PTHR31760">
    <property type="entry name" value="S-ADENOSYL-L-METHIONINE-DEPENDENT METHYLTRANSFERASES SUPERFAMILY PROTEIN"/>
    <property type="match status" value="1"/>
</dbReference>
<dbReference type="PANTHER" id="PTHR31760:SF0">
    <property type="entry name" value="S-ADENOSYL-L-METHIONINE-DEPENDENT METHYLTRANSFERASES SUPERFAMILY PROTEIN"/>
    <property type="match status" value="1"/>
</dbReference>
<dbReference type="Pfam" id="PF02527">
    <property type="entry name" value="GidB"/>
    <property type="match status" value="1"/>
</dbReference>
<dbReference type="SUPFAM" id="SSF53335">
    <property type="entry name" value="S-adenosyl-L-methionine-dependent methyltransferases"/>
    <property type="match status" value="1"/>
</dbReference>
<keyword id="KW-0963">Cytoplasm</keyword>
<keyword id="KW-0489">Methyltransferase</keyword>
<keyword id="KW-1185">Reference proteome</keyword>
<keyword id="KW-0698">rRNA processing</keyword>
<keyword id="KW-0949">S-adenosyl-L-methionine</keyword>
<keyword id="KW-0808">Transferase</keyword>
<comment type="function">
    <text evidence="1">Specifically methylates the N7 position of guanine in position 527 of 16S rRNA.</text>
</comment>
<comment type="catalytic activity">
    <reaction evidence="1">
        <text>guanosine(527) in 16S rRNA + S-adenosyl-L-methionine = N(7)-methylguanosine(527) in 16S rRNA + S-adenosyl-L-homocysteine</text>
        <dbReference type="Rhea" id="RHEA:42732"/>
        <dbReference type="Rhea" id="RHEA-COMP:10209"/>
        <dbReference type="Rhea" id="RHEA-COMP:10210"/>
        <dbReference type="ChEBI" id="CHEBI:57856"/>
        <dbReference type="ChEBI" id="CHEBI:59789"/>
        <dbReference type="ChEBI" id="CHEBI:74269"/>
        <dbReference type="ChEBI" id="CHEBI:74480"/>
        <dbReference type="EC" id="2.1.1.170"/>
    </reaction>
</comment>
<comment type="subcellular location">
    <subcellularLocation>
        <location evidence="1">Cytoplasm</location>
    </subcellularLocation>
</comment>
<comment type="similarity">
    <text evidence="1">Belongs to the methyltransferase superfamily. RNA methyltransferase RsmG family.</text>
</comment>
<name>RSMG_PARL1</name>
<evidence type="ECO:0000255" key="1">
    <source>
        <dbReference type="HAMAP-Rule" id="MF_00074"/>
    </source>
</evidence>
<evidence type="ECO:0000256" key="2">
    <source>
        <dbReference type="SAM" id="MobiDB-lite"/>
    </source>
</evidence>
<feature type="chain" id="PRO_0000335390" description="Ribosomal RNA small subunit methyltransferase G">
    <location>
        <begin position="1"/>
        <end position="226"/>
    </location>
</feature>
<feature type="region of interest" description="Disordered" evidence="2">
    <location>
        <begin position="199"/>
        <end position="226"/>
    </location>
</feature>
<feature type="binding site" evidence="1">
    <location>
        <position position="83"/>
    </location>
    <ligand>
        <name>S-adenosyl-L-methionine</name>
        <dbReference type="ChEBI" id="CHEBI:59789"/>
    </ligand>
</feature>
<feature type="binding site" evidence="1">
    <location>
        <position position="88"/>
    </location>
    <ligand>
        <name>S-adenosyl-L-methionine</name>
        <dbReference type="ChEBI" id="CHEBI:59789"/>
    </ligand>
</feature>
<feature type="binding site" evidence="1">
    <location>
        <begin position="136"/>
        <end position="137"/>
    </location>
    <ligand>
        <name>S-adenosyl-L-methionine</name>
        <dbReference type="ChEBI" id="CHEBI:59789"/>
    </ligand>
</feature>
<feature type="binding site" evidence="1">
    <location>
        <position position="152"/>
    </location>
    <ligand>
        <name>S-adenosyl-L-methionine</name>
        <dbReference type="ChEBI" id="CHEBI:59789"/>
    </ligand>
</feature>
<protein>
    <recommendedName>
        <fullName evidence="1">Ribosomal RNA small subunit methyltransferase G</fullName>
        <ecNumber evidence="1">2.1.1.170</ecNumber>
    </recommendedName>
    <alternativeName>
        <fullName evidence="1">16S rRNA 7-methylguanosine methyltransferase</fullName>
        <shortName evidence="1">16S rRNA m7G methyltransferase</shortName>
    </alternativeName>
</protein>
<reference key="1">
    <citation type="journal article" date="2011" name="Stand. Genomic Sci.">
        <title>Complete genome sequence of Parvibaculum lavamentivorans type strain (DS-1(T)).</title>
        <authorList>
            <person name="Schleheck D."/>
            <person name="Weiss M."/>
            <person name="Pitluck S."/>
            <person name="Bruce D."/>
            <person name="Land M.L."/>
            <person name="Han S."/>
            <person name="Saunders E."/>
            <person name="Tapia R."/>
            <person name="Detter C."/>
            <person name="Brettin T."/>
            <person name="Han J."/>
            <person name="Woyke T."/>
            <person name="Goodwin L."/>
            <person name="Pennacchio L."/>
            <person name="Nolan M."/>
            <person name="Cook A.M."/>
            <person name="Kjelleberg S."/>
            <person name="Thomas T."/>
        </authorList>
    </citation>
    <scope>NUCLEOTIDE SEQUENCE [LARGE SCALE GENOMIC DNA]</scope>
    <source>
        <strain>DS-1 / DSM 13023 / NCIMB 13966</strain>
    </source>
</reference>
<gene>
    <name evidence="1" type="primary">rsmG</name>
    <name type="ordered locus">Plav_1275</name>
</gene>
<sequence length="226" mass="24833">MTQHIVSGGPQVVDSESFSALTNVSRETLDRLLSYEALLRKWQKSINLVSNGSLPELWRRHMLDSAQLVCLVPESARRWIDLGSGGGFPGLVIAILLRERPGFQMHLVESDQRKCVFMREVARVTGAPATVHTVRIEAFAQGAEAGDVVSARALAPLDRLFGWAAPLFGPETIGLFLKGQGLQDELTLARESWIFDAEFSPSQSDPEGSVLKVRGLHGPDGQPHRR</sequence>